<keyword id="KW-0903">Direct protein sequencing</keyword>
<keyword id="KW-1015">Disulfide bond</keyword>
<keyword id="KW-0964">Secreted</keyword>
<keyword id="KW-0800">Toxin</keyword>
<name>3SIY1_DENAN</name>
<protein>
    <recommendedName>
        <fullName>Synergistic-type venom protein C8S2, chain 1</fullName>
    </recommendedName>
</protein>
<sequence>LTCVTGKSIGGISTEECAAGQKRCFKKWTKMGPKLYDVSRGCTATCPKADEYGCVKCCNIDK</sequence>
<reference key="1">
    <citation type="journal article" date="1979" name="Hoppe-Seyler's Z. Physiol. Chem.">
        <title>Snake venom. The amino-acid sequence of the subunits of two reduced and S-carboxymethylated proteins (C8S2 and C9S3) from Dendroaspis angusticeps venom.</title>
        <authorList>
            <person name="Joubert F.J."/>
            <person name="Viljoen C.C."/>
        </authorList>
    </citation>
    <scope>PROTEIN SEQUENCE</scope>
    <scope>FUNCTION</scope>
    <scope>SUBCELLULAR LOCATION</scope>
    <source>
        <tissue>Venom</tissue>
    </source>
</reference>
<comment type="function">
    <text evidence="2">This protein shows a synergetic toxic effect in that it enhances the toxicity of other toxins.</text>
</comment>
<comment type="subunit">
    <text evidence="1">Heterodimer of C8S2 chain 1 and chain 2 (AC P01411); disulfide-linked.</text>
</comment>
<comment type="subcellular location">
    <subcellularLocation>
        <location evidence="2">Secreted</location>
    </subcellularLocation>
</comment>
<comment type="tissue specificity">
    <text evidence="4">Expressed by the venom gland.</text>
</comment>
<comment type="miscellaneous">
    <text evidence="3">Is classified as a P-type cytotoxin, since a proline residue stands at position 33 (Pro-31 in standard classification).</text>
</comment>
<comment type="similarity">
    <text evidence="3">Belongs to the three-finger toxin family. Short-chain subfamily. Aminergic toxin sub-subfamily.</text>
</comment>
<accession>P01410</accession>
<dbReference type="PIR" id="A01680">
    <property type="entry name" value="V6EP8A"/>
</dbReference>
<dbReference type="SMR" id="P01410"/>
<dbReference type="GO" id="GO:0005576">
    <property type="term" value="C:extracellular region"/>
    <property type="evidence" value="ECO:0007669"/>
    <property type="project" value="UniProtKB-SubCell"/>
</dbReference>
<dbReference type="GO" id="GO:0090729">
    <property type="term" value="F:toxin activity"/>
    <property type="evidence" value="ECO:0007669"/>
    <property type="project" value="UniProtKB-KW"/>
</dbReference>
<dbReference type="CDD" id="cd00206">
    <property type="entry name" value="TFP_snake_toxin"/>
    <property type="match status" value="1"/>
</dbReference>
<dbReference type="Gene3D" id="2.10.60.10">
    <property type="entry name" value="CD59"/>
    <property type="match status" value="1"/>
</dbReference>
<dbReference type="InterPro" id="IPR003571">
    <property type="entry name" value="Snake_3FTx"/>
</dbReference>
<dbReference type="InterPro" id="IPR045860">
    <property type="entry name" value="Snake_toxin-like_sf"/>
</dbReference>
<dbReference type="InterPro" id="IPR018354">
    <property type="entry name" value="Snake_toxin_con_site"/>
</dbReference>
<dbReference type="InterPro" id="IPR054131">
    <property type="entry name" value="Toxin_cobra-type"/>
</dbReference>
<dbReference type="Pfam" id="PF21947">
    <property type="entry name" value="Toxin_cobra-type"/>
    <property type="match status" value="1"/>
</dbReference>
<dbReference type="SUPFAM" id="SSF57302">
    <property type="entry name" value="Snake toxin-like"/>
    <property type="match status" value="1"/>
</dbReference>
<dbReference type="PROSITE" id="PS00272">
    <property type="entry name" value="SNAKE_TOXIN"/>
    <property type="match status" value="1"/>
</dbReference>
<organism>
    <name type="scientific">Dendroaspis angusticeps</name>
    <name type="common">Eastern green mamba</name>
    <name type="synonym">Naja angusticeps</name>
    <dbReference type="NCBI Taxonomy" id="8618"/>
    <lineage>
        <taxon>Eukaryota</taxon>
        <taxon>Metazoa</taxon>
        <taxon>Chordata</taxon>
        <taxon>Craniata</taxon>
        <taxon>Vertebrata</taxon>
        <taxon>Euteleostomi</taxon>
        <taxon>Lepidosauria</taxon>
        <taxon>Squamata</taxon>
        <taxon>Bifurcata</taxon>
        <taxon>Unidentata</taxon>
        <taxon>Episquamata</taxon>
        <taxon>Toxicofera</taxon>
        <taxon>Serpentes</taxon>
        <taxon>Colubroidea</taxon>
        <taxon>Elapidae</taxon>
        <taxon>Elapinae</taxon>
        <taxon>Dendroaspis</taxon>
    </lineage>
</organism>
<proteinExistence type="evidence at protein level"/>
<evidence type="ECO:0000250" key="1">
    <source>
        <dbReference type="UniProtKB" id="P0DQP2"/>
    </source>
</evidence>
<evidence type="ECO:0000269" key="2">
    <source>
    </source>
</evidence>
<evidence type="ECO:0000305" key="3"/>
<evidence type="ECO:0000305" key="4">
    <source>
    </source>
</evidence>
<feature type="chain" id="PRO_0000093619" description="Synergistic-type venom protein C8S2, chain 1" evidence="2">
    <location>
        <begin position="1"/>
        <end position="62"/>
    </location>
</feature>
<feature type="disulfide bond" evidence="1">
    <location>
        <begin position="3"/>
        <end position="24"/>
    </location>
</feature>
<feature type="disulfide bond" evidence="1">
    <location>
        <begin position="17"/>
        <end position="42"/>
    </location>
</feature>
<feature type="disulfide bond" evidence="1">
    <location>
        <begin position="46"/>
        <end position="57"/>
    </location>
</feature>
<feature type="disulfide bond" description="Interchain" evidence="1">
    <location>
        <position position="54"/>
    </location>
</feature>